<reference key="1">
    <citation type="journal article" date="2004" name="Proc. Natl. Acad. Sci. U.S.A.">
        <title>The diploid genome sequence of Candida albicans.</title>
        <authorList>
            <person name="Jones T."/>
            <person name="Federspiel N.A."/>
            <person name="Chibana H."/>
            <person name="Dungan J."/>
            <person name="Kalman S."/>
            <person name="Magee B.B."/>
            <person name="Newport G."/>
            <person name="Thorstenson Y.R."/>
            <person name="Agabian N."/>
            <person name="Magee P.T."/>
            <person name="Davis R.W."/>
            <person name="Scherer S."/>
        </authorList>
    </citation>
    <scope>NUCLEOTIDE SEQUENCE [LARGE SCALE GENOMIC DNA]</scope>
    <source>
        <strain>SC5314 / ATCC MYA-2876</strain>
    </source>
</reference>
<reference key="2">
    <citation type="journal article" date="2007" name="Genome Biol.">
        <title>Assembly of the Candida albicans genome into sixteen supercontigs aligned on the eight chromosomes.</title>
        <authorList>
            <person name="van het Hoog M."/>
            <person name="Rast T.J."/>
            <person name="Martchenko M."/>
            <person name="Grindle S."/>
            <person name="Dignard D."/>
            <person name="Hogues H."/>
            <person name="Cuomo C."/>
            <person name="Berriman M."/>
            <person name="Scherer S."/>
            <person name="Magee B.B."/>
            <person name="Whiteway M."/>
            <person name="Chibana H."/>
            <person name="Nantel A."/>
            <person name="Magee P.T."/>
        </authorList>
    </citation>
    <scope>GENOME REANNOTATION</scope>
    <source>
        <strain>SC5314 / ATCC MYA-2876</strain>
    </source>
</reference>
<reference key="3">
    <citation type="journal article" date="2013" name="Genome Biol.">
        <title>Assembly of a phased diploid Candida albicans genome facilitates allele-specific measurements and provides a simple model for repeat and indel structure.</title>
        <authorList>
            <person name="Muzzey D."/>
            <person name="Schwartz K."/>
            <person name="Weissman J.S."/>
            <person name="Sherlock G."/>
        </authorList>
    </citation>
    <scope>NUCLEOTIDE SEQUENCE [LARGE SCALE GENOMIC DNA]</scope>
    <scope>GENOME REANNOTATION</scope>
    <source>
        <strain>SC5314 / ATCC MYA-2876</strain>
    </source>
</reference>
<organism>
    <name type="scientific">Candida albicans (strain SC5314 / ATCC MYA-2876)</name>
    <name type="common">Yeast</name>
    <dbReference type="NCBI Taxonomy" id="237561"/>
    <lineage>
        <taxon>Eukaryota</taxon>
        <taxon>Fungi</taxon>
        <taxon>Dikarya</taxon>
        <taxon>Ascomycota</taxon>
        <taxon>Saccharomycotina</taxon>
        <taxon>Pichiomycetes</taxon>
        <taxon>Debaryomycetaceae</taxon>
        <taxon>Candida/Lodderomyces clade</taxon>
        <taxon>Candida</taxon>
    </lineage>
</organism>
<keyword id="KW-0256">Endoplasmic reticulum</keyword>
<keyword id="KW-0328">Glycosyltransferase</keyword>
<keyword id="KW-0472">Membrane</keyword>
<keyword id="KW-1185">Reference proteome</keyword>
<keyword id="KW-0735">Signal-anchor</keyword>
<keyword id="KW-0808">Transferase</keyword>
<keyword id="KW-0812">Transmembrane</keyword>
<keyword id="KW-1133">Transmembrane helix</keyword>
<feature type="chain" id="PRO_0000080253" description="Chitobiosyldiphosphodolichol beta-mannosyltransferase">
    <location>
        <begin position="1"/>
        <end position="456"/>
    </location>
</feature>
<feature type="topological domain" description="Lumenal" evidence="1">
    <location>
        <begin position="1"/>
        <end position="22"/>
    </location>
</feature>
<feature type="transmembrane region" description="Helical" evidence="2">
    <location>
        <begin position="23"/>
        <end position="43"/>
    </location>
</feature>
<feature type="topological domain" description="Cytoplasmic" evidence="1">
    <location>
        <begin position="44"/>
        <end position="103"/>
    </location>
</feature>
<feature type="intramembrane region" description="Helical" evidence="2">
    <location>
        <begin position="104"/>
        <end position="124"/>
    </location>
</feature>
<feature type="topological domain" description="Cytoplasmic" evidence="1">
    <location>
        <begin position="125"/>
        <end position="456"/>
    </location>
</feature>
<gene>
    <name type="primary">ALG1</name>
    <name type="ordered locus">CAALFM_C406000WA</name>
    <name type="ORF">CaO19.11888</name>
    <name type="ORF">CaO19.4410</name>
</gene>
<sequence length="456" mass="52325">MGEIIKYKGFDHVWQYSGPWLYCLIGIYISLPVLAYHILPWIFHKNRSNKRKTISIFVLGDLGHSPRMCYHASSFSKLDYYVNLCGYVETEPSHQIVDDVNIDIIPIEAIKNTNNLPYIMFAILKVVRQCGKIWSILWDTRGSDYIMIQNPPSIPILLIVILFKTVFSRETKLIIDWHNLNYTILNLRYNNLNHPFVKLVKLYEKILGQFANLNITVTKSMKKYLVKEFGFQKSKIVTLYDRPGVQFQPLSNKREFMSEHKLFEDIDIEKYKVLISSTSFTPDEDFNILLDALKNYENTPNTPPILLIVTGKGPLKGKFLETVDKLEFTNKVCVKSAWLSSEDYPKVLACADLGISLHTSSSGIDLPMKIVDFFGCGVPVVSLDFPAIDELVKNKVNGLITNSKSDQTKEVARLVTEVFTDDALLRSIKEGALEESNSRWDENWMQTFSSIFENKS</sequence>
<evidence type="ECO:0000250" key="1">
    <source>
        <dbReference type="UniProtKB" id="P16661"/>
    </source>
</evidence>
<evidence type="ECO:0000255" key="2"/>
<evidence type="ECO:0000305" key="3"/>
<dbReference type="EC" id="2.4.1.142" evidence="1"/>
<dbReference type="EMBL" id="CP017626">
    <property type="protein sequence ID" value="AOW29327.1"/>
    <property type="molecule type" value="Genomic_DNA"/>
</dbReference>
<dbReference type="RefSeq" id="XP_711858.1">
    <property type="nucleotide sequence ID" value="XM_706765.1"/>
</dbReference>
<dbReference type="SMR" id="Q59Q79"/>
<dbReference type="FunCoup" id="Q59Q79">
    <property type="interactions" value="944"/>
</dbReference>
<dbReference type="STRING" id="237561.Q59Q79"/>
<dbReference type="GlyCosmos" id="Q59Q79">
    <property type="glycosylation" value="3 sites, No reported glycans"/>
</dbReference>
<dbReference type="EnsemblFungi" id="C4_06000W_A-T">
    <property type="protein sequence ID" value="C4_06000W_A-T-p1"/>
    <property type="gene ID" value="C4_06000W_A"/>
</dbReference>
<dbReference type="GeneID" id="3646517"/>
<dbReference type="KEGG" id="cal:CAALFM_C406000WA"/>
<dbReference type="CGD" id="CAL0000174251">
    <property type="gene designation" value="ALG1"/>
</dbReference>
<dbReference type="VEuPathDB" id="FungiDB:C4_06000W_A"/>
<dbReference type="eggNOG" id="KOG2941">
    <property type="taxonomic scope" value="Eukaryota"/>
</dbReference>
<dbReference type="HOGENOM" id="CLU_012079_0_0_1"/>
<dbReference type="InParanoid" id="Q59Q79"/>
<dbReference type="OrthoDB" id="614844at2759"/>
<dbReference type="UniPathway" id="UPA00378"/>
<dbReference type="PRO" id="PR:Q59Q79"/>
<dbReference type="Proteomes" id="UP000000559">
    <property type="component" value="Chromosome 4"/>
</dbReference>
<dbReference type="GO" id="GO:0098554">
    <property type="term" value="C:cytoplasmic side of endoplasmic reticulum membrane"/>
    <property type="evidence" value="ECO:0000250"/>
    <property type="project" value="UniProtKB"/>
</dbReference>
<dbReference type="GO" id="GO:0005783">
    <property type="term" value="C:endoplasmic reticulum"/>
    <property type="evidence" value="ECO:0000318"/>
    <property type="project" value="GO_Central"/>
</dbReference>
<dbReference type="GO" id="GO:0004578">
    <property type="term" value="F:chitobiosyldiphosphodolichol beta-mannosyltransferase activity"/>
    <property type="evidence" value="ECO:0000250"/>
    <property type="project" value="UniProtKB"/>
</dbReference>
<dbReference type="GO" id="GO:0000030">
    <property type="term" value="F:mannosyltransferase activity"/>
    <property type="evidence" value="ECO:0000318"/>
    <property type="project" value="GO_Central"/>
</dbReference>
<dbReference type="GO" id="GO:0006488">
    <property type="term" value="P:dolichol-linked oligosaccharide biosynthetic process"/>
    <property type="evidence" value="ECO:0000250"/>
    <property type="project" value="UniProtKB"/>
</dbReference>
<dbReference type="GO" id="GO:0006486">
    <property type="term" value="P:protein glycosylation"/>
    <property type="evidence" value="ECO:0000318"/>
    <property type="project" value="GO_Central"/>
</dbReference>
<dbReference type="FunFam" id="3.40.50.2000:FF:000109">
    <property type="entry name" value="Chitobiosyldiphosphodolichol beta-mannosyltransferase"/>
    <property type="match status" value="1"/>
</dbReference>
<dbReference type="Gene3D" id="3.40.50.2000">
    <property type="entry name" value="Glycogen Phosphorylase B"/>
    <property type="match status" value="2"/>
</dbReference>
<dbReference type="InterPro" id="IPR026051">
    <property type="entry name" value="ALG1-like"/>
</dbReference>
<dbReference type="InterPro" id="IPR001296">
    <property type="entry name" value="Glyco_trans_1"/>
</dbReference>
<dbReference type="PANTHER" id="PTHR13036">
    <property type="entry name" value="BETA1,4 MANNOSYLTRANSFERASE"/>
    <property type="match status" value="1"/>
</dbReference>
<dbReference type="PANTHER" id="PTHR13036:SF0">
    <property type="entry name" value="CHITOBIOSYLDIPHOSPHODOLICHOL BETA-MANNOSYLTRANSFERASE"/>
    <property type="match status" value="1"/>
</dbReference>
<dbReference type="Pfam" id="PF00534">
    <property type="entry name" value="Glycos_transf_1"/>
    <property type="match status" value="1"/>
</dbReference>
<dbReference type="SUPFAM" id="SSF53756">
    <property type="entry name" value="UDP-Glycosyltransferase/glycogen phosphorylase"/>
    <property type="match status" value="1"/>
</dbReference>
<accession>Q59Q79</accession>
<accession>A0A1D8PMH4</accession>
<protein>
    <recommendedName>
        <fullName evidence="1">Chitobiosyldiphosphodolichol beta-mannosyltransferase</fullName>
        <ecNumber evidence="1">2.4.1.142</ecNumber>
    </recommendedName>
    <alternativeName>
        <fullName>Asparagine-linked glycosylation protein 1</fullName>
    </alternativeName>
    <alternativeName>
        <fullName>Beta-1,4-mannosyltransferase</fullName>
    </alternativeName>
    <alternativeName>
        <fullName>GDP-Man:GlcNAc2-PP-dolichol mannosyltransferase</fullName>
    </alternativeName>
    <alternativeName>
        <fullName>GDP-mannose-dolichol diphosphochitobiose mannosyltransferase</fullName>
    </alternativeName>
</protein>
<proteinExistence type="inferred from homology"/>
<name>ALG1_CANAL</name>
<comment type="function">
    <text evidence="1">Participates in the formation of the lipid-linked precursor oligosaccharide for N-glycosylation. Involved in assembling the dolichol-pyrophosphate-GlcNAc(2)-Man(5) intermediate on the cytoplasmic surface of the ER.</text>
</comment>
<comment type="catalytic activity">
    <reaction evidence="1">
        <text>an N,N'-diacetylchitobiosyl-diphospho-di-trans,poly-cis-dolichol + GDP-alpha-D-mannose = a beta-D-Man-(1-&gt;4)-beta-D-GlcNAc-(1-&gt;4)-alpha-D-GlcNAc-diphospho-di-trans,poly-cis-dolichol + GDP + H(+)</text>
        <dbReference type="Rhea" id="RHEA:13865"/>
        <dbReference type="Rhea" id="RHEA-COMP:19510"/>
        <dbReference type="Rhea" id="RHEA-COMP:19511"/>
        <dbReference type="ChEBI" id="CHEBI:15378"/>
        <dbReference type="ChEBI" id="CHEBI:57269"/>
        <dbReference type="ChEBI" id="CHEBI:57527"/>
        <dbReference type="ChEBI" id="CHEBI:58189"/>
        <dbReference type="ChEBI" id="CHEBI:58472"/>
        <dbReference type="EC" id="2.4.1.142"/>
    </reaction>
    <physiologicalReaction direction="left-to-right" evidence="1">
        <dbReference type="Rhea" id="RHEA:13866"/>
    </physiologicalReaction>
</comment>
<comment type="pathway">
    <text evidence="1">Protein modification; protein glycosylation.</text>
</comment>
<comment type="subcellular location">
    <subcellularLocation>
        <location evidence="1">Endoplasmic reticulum membrane</location>
        <topology evidence="1">Single-pass membrane protein</topology>
    </subcellularLocation>
</comment>
<comment type="similarity">
    <text evidence="3">Belongs to the glycosyltransferase group 1 family.</text>
</comment>